<keyword id="KW-0687">Ribonucleoprotein</keyword>
<keyword id="KW-0689">Ribosomal protein</keyword>
<feature type="chain" id="PRO_1000121748" description="Large ribosomal subunit protein uL29">
    <location>
        <begin position="1"/>
        <end position="70"/>
    </location>
</feature>
<dbReference type="EMBL" id="CP001078">
    <property type="protein sequence ID" value="ACD54049.1"/>
    <property type="molecule type" value="Genomic_DNA"/>
</dbReference>
<dbReference type="RefSeq" id="WP_003374089.1">
    <property type="nucleotide sequence ID" value="NC_010723.1"/>
</dbReference>
<dbReference type="SMR" id="B2UYB8"/>
<dbReference type="KEGG" id="cbt:CLH_0245"/>
<dbReference type="HOGENOM" id="CLU_158491_5_2_9"/>
<dbReference type="GO" id="GO:0022625">
    <property type="term" value="C:cytosolic large ribosomal subunit"/>
    <property type="evidence" value="ECO:0007669"/>
    <property type="project" value="TreeGrafter"/>
</dbReference>
<dbReference type="GO" id="GO:0003735">
    <property type="term" value="F:structural constituent of ribosome"/>
    <property type="evidence" value="ECO:0007669"/>
    <property type="project" value="InterPro"/>
</dbReference>
<dbReference type="GO" id="GO:0006412">
    <property type="term" value="P:translation"/>
    <property type="evidence" value="ECO:0007669"/>
    <property type="project" value="UniProtKB-UniRule"/>
</dbReference>
<dbReference type="CDD" id="cd00427">
    <property type="entry name" value="Ribosomal_L29_HIP"/>
    <property type="match status" value="1"/>
</dbReference>
<dbReference type="FunFam" id="1.10.287.310:FF:000001">
    <property type="entry name" value="50S ribosomal protein L29"/>
    <property type="match status" value="1"/>
</dbReference>
<dbReference type="Gene3D" id="1.10.287.310">
    <property type="match status" value="1"/>
</dbReference>
<dbReference type="HAMAP" id="MF_00374">
    <property type="entry name" value="Ribosomal_uL29"/>
    <property type="match status" value="1"/>
</dbReference>
<dbReference type="InterPro" id="IPR050063">
    <property type="entry name" value="Ribosomal_protein_uL29"/>
</dbReference>
<dbReference type="InterPro" id="IPR001854">
    <property type="entry name" value="Ribosomal_uL29"/>
</dbReference>
<dbReference type="InterPro" id="IPR018254">
    <property type="entry name" value="Ribosomal_uL29_CS"/>
</dbReference>
<dbReference type="InterPro" id="IPR036049">
    <property type="entry name" value="Ribosomal_uL29_sf"/>
</dbReference>
<dbReference type="NCBIfam" id="TIGR00012">
    <property type="entry name" value="L29"/>
    <property type="match status" value="1"/>
</dbReference>
<dbReference type="PANTHER" id="PTHR10916">
    <property type="entry name" value="60S RIBOSOMAL PROTEIN L35/50S RIBOSOMAL PROTEIN L29"/>
    <property type="match status" value="1"/>
</dbReference>
<dbReference type="PANTHER" id="PTHR10916:SF0">
    <property type="entry name" value="LARGE RIBOSOMAL SUBUNIT PROTEIN UL29C"/>
    <property type="match status" value="1"/>
</dbReference>
<dbReference type="Pfam" id="PF00831">
    <property type="entry name" value="Ribosomal_L29"/>
    <property type="match status" value="1"/>
</dbReference>
<dbReference type="SUPFAM" id="SSF46561">
    <property type="entry name" value="Ribosomal protein L29 (L29p)"/>
    <property type="match status" value="1"/>
</dbReference>
<dbReference type="PROSITE" id="PS00579">
    <property type="entry name" value="RIBOSOMAL_L29"/>
    <property type="match status" value="1"/>
</dbReference>
<evidence type="ECO:0000255" key="1">
    <source>
        <dbReference type="HAMAP-Rule" id="MF_00374"/>
    </source>
</evidence>
<evidence type="ECO:0000305" key="2"/>
<sequence>MKARELKELRSSNPQDLTVKLGDLKAELFNLRFQLATGQLENPMRIREVKKSIAQIKTILREDEMRALEQ</sequence>
<comment type="similarity">
    <text evidence="1">Belongs to the universal ribosomal protein uL29 family.</text>
</comment>
<proteinExistence type="inferred from homology"/>
<protein>
    <recommendedName>
        <fullName evidence="1">Large ribosomal subunit protein uL29</fullName>
    </recommendedName>
    <alternativeName>
        <fullName evidence="2">50S ribosomal protein L29</fullName>
    </alternativeName>
</protein>
<accession>B2UYB8</accession>
<reference key="1">
    <citation type="submission" date="2008-05" db="EMBL/GenBank/DDBJ databases">
        <title>Complete genome sequence of Clostridium botulinum E3 str. Alaska E43.</title>
        <authorList>
            <person name="Brinkac L.M."/>
            <person name="Brown J.L."/>
            <person name="Bruce D."/>
            <person name="Detter C."/>
            <person name="Munk C."/>
            <person name="Smith L.A."/>
            <person name="Smith T.J."/>
            <person name="Sutton G."/>
            <person name="Brettin T.S."/>
        </authorList>
    </citation>
    <scope>NUCLEOTIDE SEQUENCE [LARGE SCALE GENOMIC DNA]</scope>
    <source>
        <strain>Alaska E43 / Type E3</strain>
    </source>
</reference>
<gene>
    <name evidence="1" type="primary">rpmC</name>
    <name type="ordered locus">CLH_0245</name>
</gene>
<organism>
    <name type="scientific">Clostridium botulinum (strain Alaska E43 / Type E3)</name>
    <dbReference type="NCBI Taxonomy" id="508767"/>
    <lineage>
        <taxon>Bacteria</taxon>
        <taxon>Bacillati</taxon>
        <taxon>Bacillota</taxon>
        <taxon>Clostridia</taxon>
        <taxon>Eubacteriales</taxon>
        <taxon>Clostridiaceae</taxon>
        <taxon>Clostridium</taxon>
    </lineage>
</organism>
<name>RL29_CLOBA</name>